<sequence length="323" mass="36116">MHKYQTHWVEHSIVKILSSTGKKHIALMAGGMSAEREVSLVSSEGVSKALIELGYRVTFIDMGADIAVRLQEIKPDIVFNCLHGTYGEDGCLPGLLNIMRIPYTHSGVLSSALAFNKIHSRIWFLTNNINMAESIVVNKSDNIKNDPMKRPYVIKPLAQGSSIGVEVIFAEDDFNFADYDFPYGDQVIIEQYIKGQGRELQVAVLNGKALGALEIKLLKNRFYDYETKYTEGFADHLCPAPLPANLYEKLLIESEKIYKTMNCKGPARAEFILEEQTNKLYALEINTHPGMMPLSIVPEIAAYAGINFTNLIEEIIKTASFES</sequence>
<proteinExistence type="inferred from homology"/>
<dbReference type="EC" id="6.3.2.4" evidence="2"/>
<dbReference type="EMBL" id="CP001227">
    <property type="protein sequence ID" value="ACR47277.1"/>
    <property type="molecule type" value="Genomic_DNA"/>
</dbReference>
<dbReference type="RefSeq" id="WP_012736550.1">
    <property type="nucleotide sequence ID" value="NC_012730.1"/>
</dbReference>
<dbReference type="SMR" id="C4K126"/>
<dbReference type="KEGG" id="rpk:RPR_02150"/>
<dbReference type="HOGENOM" id="CLU_039268_1_1_5"/>
<dbReference type="UniPathway" id="UPA00219"/>
<dbReference type="Proteomes" id="UP000005015">
    <property type="component" value="Chromosome"/>
</dbReference>
<dbReference type="GO" id="GO:0005737">
    <property type="term" value="C:cytoplasm"/>
    <property type="evidence" value="ECO:0007669"/>
    <property type="project" value="UniProtKB-SubCell"/>
</dbReference>
<dbReference type="GO" id="GO:0005524">
    <property type="term" value="F:ATP binding"/>
    <property type="evidence" value="ECO:0007669"/>
    <property type="project" value="UniProtKB-KW"/>
</dbReference>
<dbReference type="GO" id="GO:0008716">
    <property type="term" value="F:D-alanine-D-alanine ligase activity"/>
    <property type="evidence" value="ECO:0007669"/>
    <property type="project" value="UniProtKB-UniRule"/>
</dbReference>
<dbReference type="GO" id="GO:0046872">
    <property type="term" value="F:metal ion binding"/>
    <property type="evidence" value="ECO:0007669"/>
    <property type="project" value="UniProtKB-KW"/>
</dbReference>
<dbReference type="GO" id="GO:0071555">
    <property type="term" value="P:cell wall organization"/>
    <property type="evidence" value="ECO:0007669"/>
    <property type="project" value="UniProtKB-KW"/>
</dbReference>
<dbReference type="GO" id="GO:0009252">
    <property type="term" value="P:peptidoglycan biosynthetic process"/>
    <property type="evidence" value="ECO:0007669"/>
    <property type="project" value="UniProtKB-UniRule"/>
</dbReference>
<dbReference type="GO" id="GO:0008360">
    <property type="term" value="P:regulation of cell shape"/>
    <property type="evidence" value="ECO:0007669"/>
    <property type="project" value="UniProtKB-KW"/>
</dbReference>
<dbReference type="Gene3D" id="3.40.50.20">
    <property type="match status" value="1"/>
</dbReference>
<dbReference type="Gene3D" id="3.30.1490.20">
    <property type="entry name" value="ATP-grasp fold, A domain"/>
    <property type="match status" value="1"/>
</dbReference>
<dbReference type="Gene3D" id="3.30.470.20">
    <property type="entry name" value="ATP-grasp fold, B domain"/>
    <property type="match status" value="1"/>
</dbReference>
<dbReference type="HAMAP" id="MF_00047">
    <property type="entry name" value="Dala_Dala_lig"/>
    <property type="match status" value="1"/>
</dbReference>
<dbReference type="InterPro" id="IPR011761">
    <property type="entry name" value="ATP-grasp"/>
</dbReference>
<dbReference type="InterPro" id="IPR013815">
    <property type="entry name" value="ATP_grasp_subdomain_1"/>
</dbReference>
<dbReference type="InterPro" id="IPR000291">
    <property type="entry name" value="D-Ala_lig_Van_CS"/>
</dbReference>
<dbReference type="InterPro" id="IPR005905">
    <property type="entry name" value="D_ala_D_ala"/>
</dbReference>
<dbReference type="InterPro" id="IPR011095">
    <property type="entry name" value="Dala_Dala_lig_C"/>
</dbReference>
<dbReference type="InterPro" id="IPR011127">
    <property type="entry name" value="Dala_Dala_lig_N"/>
</dbReference>
<dbReference type="InterPro" id="IPR016185">
    <property type="entry name" value="PreATP-grasp_dom_sf"/>
</dbReference>
<dbReference type="NCBIfam" id="TIGR01205">
    <property type="entry name" value="D_ala_D_alaTIGR"/>
    <property type="match status" value="1"/>
</dbReference>
<dbReference type="NCBIfam" id="NF002378">
    <property type="entry name" value="PRK01372.1"/>
    <property type="match status" value="1"/>
</dbReference>
<dbReference type="PANTHER" id="PTHR23132">
    <property type="entry name" value="D-ALANINE--D-ALANINE LIGASE"/>
    <property type="match status" value="1"/>
</dbReference>
<dbReference type="PANTHER" id="PTHR23132:SF23">
    <property type="entry name" value="D-ALANINE--D-ALANINE LIGASE B"/>
    <property type="match status" value="1"/>
</dbReference>
<dbReference type="Pfam" id="PF07478">
    <property type="entry name" value="Dala_Dala_lig_C"/>
    <property type="match status" value="1"/>
</dbReference>
<dbReference type="Pfam" id="PF01820">
    <property type="entry name" value="Dala_Dala_lig_N"/>
    <property type="match status" value="1"/>
</dbReference>
<dbReference type="PIRSF" id="PIRSF039102">
    <property type="entry name" value="Ddl/VanB"/>
    <property type="match status" value="1"/>
</dbReference>
<dbReference type="SUPFAM" id="SSF56059">
    <property type="entry name" value="Glutathione synthetase ATP-binding domain-like"/>
    <property type="match status" value="1"/>
</dbReference>
<dbReference type="SUPFAM" id="SSF52440">
    <property type="entry name" value="PreATP-grasp domain"/>
    <property type="match status" value="1"/>
</dbReference>
<dbReference type="PROSITE" id="PS50975">
    <property type="entry name" value="ATP_GRASP"/>
    <property type="match status" value="1"/>
</dbReference>
<dbReference type="PROSITE" id="PS00843">
    <property type="entry name" value="DALA_DALA_LIGASE_1"/>
    <property type="match status" value="1"/>
</dbReference>
<dbReference type="PROSITE" id="PS00844">
    <property type="entry name" value="DALA_DALA_LIGASE_2"/>
    <property type="match status" value="1"/>
</dbReference>
<feature type="chain" id="PRO_1000202205" description="D-alanine--D-alanine ligase">
    <location>
        <begin position="1"/>
        <end position="323"/>
    </location>
</feature>
<feature type="domain" description="ATP-grasp" evidence="2">
    <location>
        <begin position="121"/>
        <end position="317"/>
    </location>
</feature>
<feature type="binding site" evidence="2">
    <location>
        <begin position="147"/>
        <end position="199"/>
    </location>
    <ligand>
        <name>ATP</name>
        <dbReference type="ChEBI" id="CHEBI:30616"/>
    </ligand>
</feature>
<feature type="binding site" evidence="2">
    <location>
        <position position="270"/>
    </location>
    <ligand>
        <name>Mg(2+)</name>
        <dbReference type="ChEBI" id="CHEBI:18420"/>
        <label>1</label>
    </ligand>
</feature>
<feature type="binding site" evidence="2">
    <location>
        <position position="284"/>
    </location>
    <ligand>
        <name>Mg(2+)</name>
        <dbReference type="ChEBI" id="CHEBI:18420"/>
        <label>1</label>
    </ligand>
</feature>
<feature type="binding site" evidence="2">
    <location>
        <position position="284"/>
    </location>
    <ligand>
        <name>Mg(2+)</name>
        <dbReference type="ChEBI" id="CHEBI:18420"/>
        <label>2</label>
    </ligand>
</feature>
<feature type="binding site" evidence="2">
    <location>
        <position position="286"/>
    </location>
    <ligand>
        <name>Mg(2+)</name>
        <dbReference type="ChEBI" id="CHEBI:18420"/>
        <label>2</label>
    </ligand>
</feature>
<accession>C4K126</accession>
<organism>
    <name type="scientific">Rickettsia peacockii (strain Rustic)</name>
    <dbReference type="NCBI Taxonomy" id="562019"/>
    <lineage>
        <taxon>Bacteria</taxon>
        <taxon>Pseudomonadati</taxon>
        <taxon>Pseudomonadota</taxon>
        <taxon>Alphaproteobacteria</taxon>
        <taxon>Rickettsiales</taxon>
        <taxon>Rickettsiaceae</taxon>
        <taxon>Rickettsieae</taxon>
        <taxon>Rickettsia</taxon>
        <taxon>spotted fever group</taxon>
    </lineage>
</organism>
<name>DDL_RICPU</name>
<protein>
    <recommendedName>
        <fullName evidence="2">D-alanine--D-alanine ligase</fullName>
        <ecNumber evidence="2">6.3.2.4</ecNumber>
    </recommendedName>
    <alternativeName>
        <fullName evidence="2">D-Ala-D-Ala ligase</fullName>
    </alternativeName>
    <alternativeName>
        <fullName evidence="2">D-alanylalanine synthetase</fullName>
    </alternativeName>
</protein>
<keyword id="KW-0067">ATP-binding</keyword>
<keyword id="KW-0133">Cell shape</keyword>
<keyword id="KW-0961">Cell wall biogenesis/degradation</keyword>
<keyword id="KW-0963">Cytoplasm</keyword>
<keyword id="KW-0436">Ligase</keyword>
<keyword id="KW-0460">Magnesium</keyword>
<keyword id="KW-0464">Manganese</keyword>
<keyword id="KW-0479">Metal-binding</keyword>
<keyword id="KW-0547">Nucleotide-binding</keyword>
<keyword id="KW-0573">Peptidoglycan synthesis</keyword>
<comment type="function">
    <text evidence="2">Cell wall formation.</text>
</comment>
<comment type="catalytic activity">
    <reaction evidence="2">
        <text>2 D-alanine + ATP = D-alanyl-D-alanine + ADP + phosphate + H(+)</text>
        <dbReference type="Rhea" id="RHEA:11224"/>
        <dbReference type="ChEBI" id="CHEBI:15378"/>
        <dbReference type="ChEBI" id="CHEBI:30616"/>
        <dbReference type="ChEBI" id="CHEBI:43474"/>
        <dbReference type="ChEBI" id="CHEBI:57416"/>
        <dbReference type="ChEBI" id="CHEBI:57822"/>
        <dbReference type="ChEBI" id="CHEBI:456216"/>
        <dbReference type="EC" id="6.3.2.4"/>
    </reaction>
</comment>
<comment type="cofactor">
    <cofactor evidence="1">
        <name>Mg(2+)</name>
        <dbReference type="ChEBI" id="CHEBI:18420"/>
    </cofactor>
    <cofactor evidence="1">
        <name>Mn(2+)</name>
        <dbReference type="ChEBI" id="CHEBI:29035"/>
    </cofactor>
    <text evidence="1">Binds 2 magnesium or manganese ions per subunit.</text>
</comment>
<comment type="pathway">
    <text evidence="2">Cell wall biogenesis; peptidoglycan biosynthesis.</text>
</comment>
<comment type="subcellular location">
    <subcellularLocation>
        <location evidence="2">Cytoplasm</location>
    </subcellularLocation>
</comment>
<comment type="similarity">
    <text evidence="2">Belongs to the D-alanine--D-alanine ligase family.</text>
</comment>
<evidence type="ECO:0000250" key="1"/>
<evidence type="ECO:0000255" key="2">
    <source>
        <dbReference type="HAMAP-Rule" id="MF_00047"/>
    </source>
</evidence>
<reference key="1">
    <citation type="journal article" date="2009" name="PLoS ONE">
        <title>Genome sequence of the endosymbiont Rickettsia peacockii and comparison with virulent Rickettsia rickettsii: identification of virulence factors.</title>
        <authorList>
            <person name="Felsheim R.F."/>
            <person name="Kurtti T.J."/>
            <person name="Munderloh U.G."/>
        </authorList>
    </citation>
    <scope>NUCLEOTIDE SEQUENCE [LARGE SCALE GENOMIC DNA]</scope>
    <source>
        <strain>Rustic</strain>
    </source>
</reference>
<gene>
    <name evidence="2" type="primary">ddl</name>
    <name type="ordered locus">RPR_02150</name>
</gene>